<keyword id="KW-0042">Antenna complex</keyword>
<keyword id="KW-0903">Direct protein sequencing</keyword>
<keyword id="KW-0472">Membrane</keyword>
<keyword id="KW-0602">Photosynthesis</keyword>
<keyword id="KW-0605">Phycobilisome</keyword>
<keyword id="KW-0793">Thylakoid</keyword>
<dbReference type="EMBL" id="M33832">
    <property type="protein sequence ID" value="AAA24882.1"/>
    <property type="molecule type" value="Genomic_DNA"/>
</dbReference>
<dbReference type="PIR" id="S32608">
    <property type="entry name" value="S32608"/>
</dbReference>
<dbReference type="SMR" id="P18542"/>
<dbReference type="GO" id="GO:0030089">
    <property type="term" value="C:phycobilisome"/>
    <property type="evidence" value="ECO:0007669"/>
    <property type="project" value="UniProtKB-KW"/>
</dbReference>
<dbReference type="GO" id="GO:0031676">
    <property type="term" value="C:plasma membrane-derived thylakoid membrane"/>
    <property type="evidence" value="ECO:0007669"/>
    <property type="project" value="UniProtKB-SubCell"/>
</dbReference>
<dbReference type="GO" id="GO:0015979">
    <property type="term" value="P:photosynthesis"/>
    <property type="evidence" value="ECO:0007669"/>
    <property type="project" value="UniProtKB-KW"/>
</dbReference>
<dbReference type="Gene3D" id="1.10.3130.20">
    <property type="entry name" value="Phycobilisome linker domain"/>
    <property type="match status" value="1"/>
</dbReference>
<dbReference type="InterPro" id="IPR008213">
    <property type="entry name" value="CpcD-like_dom"/>
</dbReference>
<dbReference type="InterPro" id="IPR001297">
    <property type="entry name" value="PBS_linker_dom"/>
</dbReference>
<dbReference type="InterPro" id="IPR038255">
    <property type="entry name" value="PBS_linker_sf"/>
</dbReference>
<dbReference type="InterPro" id="IPR016470">
    <property type="entry name" value="Phycobilisome"/>
</dbReference>
<dbReference type="PANTHER" id="PTHR34011:SF6">
    <property type="entry name" value="PHYCOBILIPROTEIN APCE"/>
    <property type="match status" value="1"/>
</dbReference>
<dbReference type="PANTHER" id="PTHR34011">
    <property type="entry name" value="PHYCOBILISOME 32.1 KDA LINKER POLYPEPTIDE, PHYCOCYANIN-ASSOCIATED, ROD 2-RELATED"/>
    <property type="match status" value="1"/>
</dbReference>
<dbReference type="Pfam" id="PF01383">
    <property type="entry name" value="CpcD"/>
    <property type="match status" value="1"/>
</dbReference>
<dbReference type="Pfam" id="PF00427">
    <property type="entry name" value="PBS_linker_poly"/>
    <property type="match status" value="1"/>
</dbReference>
<dbReference type="PIRSF" id="PIRSF005898">
    <property type="entry name" value="Phycobilisome_CpeC/CpcI"/>
    <property type="match status" value="1"/>
</dbReference>
<dbReference type="SMART" id="SM01094">
    <property type="entry name" value="CpcD"/>
    <property type="match status" value="1"/>
</dbReference>
<dbReference type="PROSITE" id="PS51441">
    <property type="entry name" value="CPCD_LIKE"/>
    <property type="match status" value="1"/>
</dbReference>
<dbReference type="PROSITE" id="PS51445">
    <property type="entry name" value="PBS_LINKER"/>
    <property type="match status" value="1"/>
</dbReference>
<protein>
    <recommendedName>
        <fullName>Phycobilisome 31.8 kDa linker polypeptide, phycoerythrin-associated, rod</fullName>
    </recommendedName>
</protein>
<comment type="function">
    <text>Rod linker protein, associated with phycoerythrocyanin. Linker polypeptides determine the state of aggregation and the location of the disk-shaped phycobiliprotein units within the phycobilisome and modulate their spectroscopic properties in order to mediate a directed and optimal energy transfer.</text>
</comment>
<comment type="subunit">
    <text>The phycobilisome is a hemidiscoidal structure that is composed of two distinct substructures: a core complex and six rods radiating from the core.</text>
</comment>
<comment type="subcellular location">
    <subcellularLocation>
        <location>Cellular thylakoid membrane</location>
        <topology>Peripheral membrane protein</topology>
        <orientation>Cytoplasmic side</orientation>
    </subcellularLocation>
    <text>Associated with phycoerythrin.</text>
</comment>
<comment type="induction">
    <text>By green light.</text>
</comment>
<comment type="similarity">
    <text evidence="2">Belongs to the phycobilisome linker protein family.</text>
</comment>
<evidence type="ECO:0000255" key="1">
    <source>
        <dbReference type="PROSITE-ProRule" id="PRU00771"/>
    </source>
</evidence>
<evidence type="ECO:0000255" key="2">
    <source>
        <dbReference type="PROSITE-ProRule" id="PRU00775"/>
    </source>
</evidence>
<evidence type="ECO:0000269" key="3">
    <source>
    </source>
</evidence>
<sequence length="286" mass="31844">MPFGPASRLGVSLFDETPPVEWVPGRSQEEAETIIRAIYRQVLGNAYVMESERLAVPESQFKRGELSVREFVRAVAKSELYRSRFFTSCARYRAIELNFRHLLGRPPLDLEEMRSHSTILDTQGFEAEIDSYIDGDEYQSTFGENIVPYIRGYKTEALQSMVQFTHTFQLVRGASSSSLKGDLSGKAPKLNALVIQSTPTAVISPASAGATFSTPPTGARTRLGVDASAGGKVYRIEVTGYRAKTFNNISKFRRSNQVFLVPYEKLSQEYQRIHQQGGVIASITPV</sequence>
<proteinExistence type="evidence at protein level"/>
<reference key="1">
    <citation type="journal article" date="1990" name="J. Bacteriol.">
        <title>Characterization of the light-regulated operon encoding the phycoerythrin-associated linker proteins from the cyanobacterium Fremyella diplosiphon.</title>
        <authorList>
            <person name="Federspiel N.A."/>
            <person name="Grossman A.R."/>
        </authorList>
    </citation>
    <scope>NUCLEOTIDE SEQUENCE [GENOMIC DNA]</scope>
</reference>
<reference key="2">
    <citation type="journal article" date="1992" name="FEBS Lett.">
        <title>Three C-phycoerythrin-associated linker polypeptides in the phycobilisome of green-light-grown Calothrix sp. PCC 7601 (cyanobacteria).</title>
        <authorList>
            <person name="Glauser M."/>
            <person name="Sidler W.A."/>
            <person name="Graham K.W."/>
            <person name="Bryant D.A."/>
            <person name="Frank G."/>
            <person name="Wehrli E."/>
            <person name="Zuber H."/>
        </authorList>
    </citation>
    <scope>PROTEIN SEQUENCE OF 2-5</scope>
</reference>
<organism>
    <name type="scientific">Microchaete diplosiphon</name>
    <name type="common">Fremyella diplosiphon</name>
    <dbReference type="NCBI Taxonomy" id="1197"/>
    <lineage>
        <taxon>Bacteria</taxon>
        <taxon>Bacillati</taxon>
        <taxon>Cyanobacteriota</taxon>
        <taxon>Cyanophyceae</taxon>
        <taxon>Nostocales</taxon>
        <taxon>Rivulariaceae</taxon>
        <taxon>Microchaete</taxon>
    </lineage>
</organism>
<gene>
    <name type="primary">cpeC</name>
</gene>
<accession>P18542</accession>
<feature type="initiator methionine" description="Removed" evidence="3">
    <location>
        <position position="1"/>
    </location>
</feature>
<feature type="chain" id="PRO_0000199212" description="Phycobilisome 31.8 kDa linker polypeptide, phycoerythrin-associated, rod">
    <location>
        <begin position="2"/>
        <end position="286"/>
    </location>
</feature>
<feature type="domain" description="PBS-linker" evidence="2">
    <location>
        <begin position="2"/>
        <end position="179"/>
    </location>
</feature>
<feature type="domain" description="CpcD-like" evidence="1">
    <location>
        <begin position="231"/>
        <end position="286"/>
    </location>
</feature>
<name>PYR1_MICDP</name>